<reference key="1">
    <citation type="journal article" date="2009" name="J. Bacteriol.">
        <title>Genomic sequencing reveals regulatory mutations and recombinational events in the widely used MC4100 lineage of Escherichia coli K-12.</title>
        <authorList>
            <person name="Ferenci T."/>
            <person name="Zhou Z."/>
            <person name="Betteridge T."/>
            <person name="Ren Y."/>
            <person name="Liu Y."/>
            <person name="Feng L."/>
            <person name="Reeves P.R."/>
            <person name="Wang L."/>
        </authorList>
    </citation>
    <scope>NUCLEOTIDE SEQUENCE [LARGE SCALE GENOMIC DNA]</scope>
    <source>
        <strain>K12 / MC4100 / BW2952</strain>
    </source>
</reference>
<proteinExistence type="inferred from homology"/>
<feature type="chain" id="PRO_1000202447" description="Elongation factor 4">
    <location>
        <begin position="1"/>
        <end position="599"/>
    </location>
</feature>
<feature type="domain" description="tr-type G">
    <location>
        <begin position="2"/>
        <end position="184"/>
    </location>
</feature>
<feature type="binding site" evidence="1">
    <location>
        <begin position="14"/>
        <end position="19"/>
    </location>
    <ligand>
        <name>GTP</name>
        <dbReference type="ChEBI" id="CHEBI:37565"/>
    </ligand>
</feature>
<feature type="binding site" evidence="1">
    <location>
        <begin position="131"/>
        <end position="134"/>
    </location>
    <ligand>
        <name>GTP</name>
        <dbReference type="ChEBI" id="CHEBI:37565"/>
    </ligand>
</feature>
<sequence>MKNIRNFSIIAHIDHGKSTLSDRIIQICGGLSDREMEAQVLDSMDLERERGITIKAQSVTLDYKASDGETYQLNFIDTPGHVDFSYEVSRSLAACEGALLVVDAGQGVEAQTLANCYTAMEMDLEVVPVLNKIDLPAADPERVAEEIEDIVGIDATDAVRCSAKTGVGVQDVLERLVRDIPPPEGDPEGPLQALIIDSWFDNYLGVVSLIRIKNGTLRKGDKVKVMSTGQTYNADRLGIFTPKQVDRTELKCGEVGWLVCAIKDIHGAPVGDTLTLARNPAEKALPGFKKVKPQVYAGLFPVSSDDYEAFRDALGKLSLNDASLFYEPESSSALGFGFRCGFLGLLHMEIIQERLEREYDLDLITTAPTVVYEVETTSREVIYVDSPSKLPAVNNIYELREPIAECHMLLPQAYLGNVITLCVEKRGVQTNMVYHGNQVALTYEIPMAEVVLDFFDRLKSTSRGYASLDYNFKRFQASDMVRVDVLINGERVDALALITHRDNSQNRGRELVEKMKDLIPRQQFDIAIQAAIGTHIIARSTVKQLRKNVLAKCYGGDISRKKKLLQKQKEGKKRMKQIGNVELPQEAFLAILHVGKDNK</sequence>
<evidence type="ECO:0000255" key="1">
    <source>
        <dbReference type="HAMAP-Rule" id="MF_00071"/>
    </source>
</evidence>
<dbReference type="EC" id="3.6.5.n1" evidence="1"/>
<dbReference type="EMBL" id="CP001396">
    <property type="protein sequence ID" value="ACR63389.1"/>
    <property type="molecule type" value="Genomic_DNA"/>
</dbReference>
<dbReference type="RefSeq" id="WP_000790168.1">
    <property type="nucleotide sequence ID" value="NC_012759.1"/>
</dbReference>
<dbReference type="SMR" id="C4ZYJ2"/>
<dbReference type="GeneID" id="93774522"/>
<dbReference type="KEGG" id="ebw:BWG_2333"/>
<dbReference type="HOGENOM" id="CLU_009995_3_3_6"/>
<dbReference type="GO" id="GO:0005886">
    <property type="term" value="C:plasma membrane"/>
    <property type="evidence" value="ECO:0007669"/>
    <property type="project" value="UniProtKB-SubCell"/>
</dbReference>
<dbReference type="GO" id="GO:0005525">
    <property type="term" value="F:GTP binding"/>
    <property type="evidence" value="ECO:0007669"/>
    <property type="project" value="UniProtKB-UniRule"/>
</dbReference>
<dbReference type="GO" id="GO:0003924">
    <property type="term" value="F:GTPase activity"/>
    <property type="evidence" value="ECO:0007669"/>
    <property type="project" value="UniProtKB-UniRule"/>
</dbReference>
<dbReference type="GO" id="GO:0097216">
    <property type="term" value="F:guanosine tetraphosphate binding"/>
    <property type="evidence" value="ECO:0007669"/>
    <property type="project" value="UniProtKB-ARBA"/>
</dbReference>
<dbReference type="GO" id="GO:0043022">
    <property type="term" value="F:ribosome binding"/>
    <property type="evidence" value="ECO:0007669"/>
    <property type="project" value="UniProtKB-UniRule"/>
</dbReference>
<dbReference type="GO" id="GO:0003746">
    <property type="term" value="F:translation elongation factor activity"/>
    <property type="evidence" value="ECO:0007669"/>
    <property type="project" value="UniProtKB-UniRule"/>
</dbReference>
<dbReference type="GO" id="GO:0045727">
    <property type="term" value="P:positive regulation of translation"/>
    <property type="evidence" value="ECO:0007669"/>
    <property type="project" value="UniProtKB-UniRule"/>
</dbReference>
<dbReference type="CDD" id="cd03699">
    <property type="entry name" value="EF4_II"/>
    <property type="match status" value="1"/>
</dbReference>
<dbReference type="CDD" id="cd16260">
    <property type="entry name" value="EF4_III"/>
    <property type="match status" value="1"/>
</dbReference>
<dbReference type="CDD" id="cd01890">
    <property type="entry name" value="LepA"/>
    <property type="match status" value="1"/>
</dbReference>
<dbReference type="CDD" id="cd03709">
    <property type="entry name" value="lepA_C"/>
    <property type="match status" value="1"/>
</dbReference>
<dbReference type="FunFam" id="3.30.70.240:FF:000005">
    <property type="entry name" value="Elongation factor 4"/>
    <property type="match status" value="1"/>
</dbReference>
<dbReference type="FunFam" id="3.40.50.300:FF:000078">
    <property type="entry name" value="Elongation factor 4"/>
    <property type="match status" value="1"/>
</dbReference>
<dbReference type="FunFam" id="2.40.30.10:FF:000015">
    <property type="entry name" value="Translation factor GUF1, mitochondrial"/>
    <property type="match status" value="1"/>
</dbReference>
<dbReference type="FunFam" id="3.30.70.2570:FF:000001">
    <property type="entry name" value="Translation factor GUF1, mitochondrial"/>
    <property type="match status" value="1"/>
</dbReference>
<dbReference type="FunFam" id="3.30.70.870:FF:000004">
    <property type="entry name" value="Translation factor GUF1, mitochondrial"/>
    <property type="match status" value="1"/>
</dbReference>
<dbReference type="Gene3D" id="3.30.70.240">
    <property type="match status" value="1"/>
</dbReference>
<dbReference type="Gene3D" id="3.30.70.2570">
    <property type="entry name" value="Elongation factor 4, C-terminal domain"/>
    <property type="match status" value="1"/>
</dbReference>
<dbReference type="Gene3D" id="3.30.70.870">
    <property type="entry name" value="Elongation Factor G (Translational Gtpase), domain 3"/>
    <property type="match status" value="1"/>
</dbReference>
<dbReference type="Gene3D" id="3.40.50.300">
    <property type="entry name" value="P-loop containing nucleotide triphosphate hydrolases"/>
    <property type="match status" value="1"/>
</dbReference>
<dbReference type="Gene3D" id="2.40.30.10">
    <property type="entry name" value="Translation factors"/>
    <property type="match status" value="1"/>
</dbReference>
<dbReference type="HAMAP" id="MF_00071">
    <property type="entry name" value="LepA"/>
    <property type="match status" value="1"/>
</dbReference>
<dbReference type="InterPro" id="IPR006297">
    <property type="entry name" value="EF-4"/>
</dbReference>
<dbReference type="InterPro" id="IPR035647">
    <property type="entry name" value="EFG_III/V"/>
</dbReference>
<dbReference type="InterPro" id="IPR000640">
    <property type="entry name" value="EFG_V-like"/>
</dbReference>
<dbReference type="InterPro" id="IPR004161">
    <property type="entry name" value="EFTu-like_2"/>
</dbReference>
<dbReference type="InterPro" id="IPR031157">
    <property type="entry name" value="G_TR_CS"/>
</dbReference>
<dbReference type="InterPro" id="IPR038363">
    <property type="entry name" value="LepA_C_sf"/>
</dbReference>
<dbReference type="InterPro" id="IPR013842">
    <property type="entry name" value="LepA_CTD"/>
</dbReference>
<dbReference type="InterPro" id="IPR035654">
    <property type="entry name" value="LepA_IV"/>
</dbReference>
<dbReference type="InterPro" id="IPR027417">
    <property type="entry name" value="P-loop_NTPase"/>
</dbReference>
<dbReference type="InterPro" id="IPR005225">
    <property type="entry name" value="Small_GTP-bd"/>
</dbReference>
<dbReference type="InterPro" id="IPR000795">
    <property type="entry name" value="T_Tr_GTP-bd_dom"/>
</dbReference>
<dbReference type="NCBIfam" id="TIGR01393">
    <property type="entry name" value="lepA"/>
    <property type="match status" value="1"/>
</dbReference>
<dbReference type="NCBIfam" id="TIGR00231">
    <property type="entry name" value="small_GTP"/>
    <property type="match status" value="1"/>
</dbReference>
<dbReference type="PANTHER" id="PTHR43512:SF4">
    <property type="entry name" value="TRANSLATION FACTOR GUF1 HOMOLOG, CHLOROPLASTIC"/>
    <property type="match status" value="1"/>
</dbReference>
<dbReference type="PANTHER" id="PTHR43512">
    <property type="entry name" value="TRANSLATION FACTOR GUF1-RELATED"/>
    <property type="match status" value="1"/>
</dbReference>
<dbReference type="Pfam" id="PF00679">
    <property type="entry name" value="EFG_C"/>
    <property type="match status" value="1"/>
</dbReference>
<dbReference type="Pfam" id="PF00009">
    <property type="entry name" value="GTP_EFTU"/>
    <property type="match status" value="1"/>
</dbReference>
<dbReference type="Pfam" id="PF03144">
    <property type="entry name" value="GTP_EFTU_D2"/>
    <property type="match status" value="1"/>
</dbReference>
<dbReference type="Pfam" id="PF06421">
    <property type="entry name" value="LepA_C"/>
    <property type="match status" value="1"/>
</dbReference>
<dbReference type="PRINTS" id="PR00315">
    <property type="entry name" value="ELONGATNFCT"/>
</dbReference>
<dbReference type="SUPFAM" id="SSF54980">
    <property type="entry name" value="EF-G C-terminal domain-like"/>
    <property type="match status" value="2"/>
</dbReference>
<dbReference type="SUPFAM" id="SSF52540">
    <property type="entry name" value="P-loop containing nucleoside triphosphate hydrolases"/>
    <property type="match status" value="1"/>
</dbReference>
<dbReference type="PROSITE" id="PS00301">
    <property type="entry name" value="G_TR_1"/>
    <property type="match status" value="1"/>
</dbReference>
<dbReference type="PROSITE" id="PS51722">
    <property type="entry name" value="G_TR_2"/>
    <property type="match status" value="1"/>
</dbReference>
<keyword id="KW-0997">Cell inner membrane</keyword>
<keyword id="KW-1003">Cell membrane</keyword>
<keyword id="KW-0342">GTP-binding</keyword>
<keyword id="KW-0378">Hydrolase</keyword>
<keyword id="KW-0472">Membrane</keyword>
<keyword id="KW-0547">Nucleotide-binding</keyword>
<keyword id="KW-0648">Protein biosynthesis</keyword>
<organism>
    <name type="scientific">Escherichia coli (strain K12 / MC4100 / BW2952)</name>
    <dbReference type="NCBI Taxonomy" id="595496"/>
    <lineage>
        <taxon>Bacteria</taxon>
        <taxon>Pseudomonadati</taxon>
        <taxon>Pseudomonadota</taxon>
        <taxon>Gammaproteobacteria</taxon>
        <taxon>Enterobacterales</taxon>
        <taxon>Enterobacteriaceae</taxon>
        <taxon>Escherichia</taxon>
    </lineage>
</organism>
<accession>C4ZYJ2</accession>
<comment type="function">
    <text evidence="1">Required for accurate and efficient protein synthesis under certain stress conditions. May act as a fidelity factor of the translation reaction, by catalyzing a one-codon backward translocation of tRNAs on improperly translocated ribosomes. Back-translocation proceeds from a post-translocation (POST) complex to a pre-translocation (PRE) complex, thus giving elongation factor G a second chance to translocate the tRNAs correctly. Binds to ribosomes in a GTP-dependent manner.</text>
</comment>
<comment type="catalytic activity">
    <reaction evidence="1">
        <text>GTP + H2O = GDP + phosphate + H(+)</text>
        <dbReference type="Rhea" id="RHEA:19669"/>
        <dbReference type="ChEBI" id="CHEBI:15377"/>
        <dbReference type="ChEBI" id="CHEBI:15378"/>
        <dbReference type="ChEBI" id="CHEBI:37565"/>
        <dbReference type="ChEBI" id="CHEBI:43474"/>
        <dbReference type="ChEBI" id="CHEBI:58189"/>
        <dbReference type="EC" id="3.6.5.n1"/>
    </reaction>
</comment>
<comment type="subcellular location">
    <subcellularLocation>
        <location evidence="1">Cell inner membrane</location>
        <topology evidence="1">Peripheral membrane protein</topology>
        <orientation evidence="1">Cytoplasmic side</orientation>
    </subcellularLocation>
</comment>
<comment type="similarity">
    <text evidence="1">Belongs to the TRAFAC class translation factor GTPase superfamily. Classic translation factor GTPase family. LepA subfamily.</text>
</comment>
<gene>
    <name evidence="1" type="primary">lepA</name>
    <name type="ordered locus">BWG_2333</name>
</gene>
<name>LEPA_ECOBW</name>
<protein>
    <recommendedName>
        <fullName evidence="1">Elongation factor 4</fullName>
        <shortName evidence="1">EF-4</shortName>
        <ecNumber evidence="1">3.6.5.n1</ecNumber>
    </recommendedName>
    <alternativeName>
        <fullName evidence="1">Ribosomal back-translocase LepA</fullName>
    </alternativeName>
</protein>